<comment type="function">
    <text evidence="1">Nucleotidase with a broad substrate specificity as it can dephosphorylate various ribo- and deoxyribonucleoside 5'-monophosphates and ribonucleoside 3'-monophosphates with highest affinity to 3'-AMP. Also hydrolyzes polyphosphate (exopolyphosphatase activity) with the preference for short-chain-length substrates (P20-25). Might be involved in the regulation of dNTP and NTP pools, and in the turnover of 3'-mononucleotides produced by numerous intracellular RNases (T1, T2, and F) during the degradation of various RNAs.</text>
</comment>
<comment type="catalytic activity">
    <reaction evidence="1">
        <text>a ribonucleoside 5'-phosphate + H2O = a ribonucleoside + phosphate</text>
        <dbReference type="Rhea" id="RHEA:12484"/>
        <dbReference type="ChEBI" id="CHEBI:15377"/>
        <dbReference type="ChEBI" id="CHEBI:18254"/>
        <dbReference type="ChEBI" id="CHEBI:43474"/>
        <dbReference type="ChEBI" id="CHEBI:58043"/>
        <dbReference type="EC" id="3.1.3.5"/>
    </reaction>
</comment>
<comment type="catalytic activity">
    <reaction evidence="1">
        <text>a ribonucleoside 3'-phosphate + H2O = a ribonucleoside + phosphate</text>
        <dbReference type="Rhea" id="RHEA:10144"/>
        <dbReference type="ChEBI" id="CHEBI:13197"/>
        <dbReference type="ChEBI" id="CHEBI:15377"/>
        <dbReference type="ChEBI" id="CHEBI:18254"/>
        <dbReference type="ChEBI" id="CHEBI:43474"/>
        <dbReference type="EC" id="3.1.3.6"/>
    </reaction>
</comment>
<comment type="catalytic activity">
    <reaction evidence="1">
        <text>[phosphate](n) + H2O = [phosphate](n-1) + phosphate + H(+)</text>
        <dbReference type="Rhea" id="RHEA:21528"/>
        <dbReference type="Rhea" id="RHEA-COMP:9859"/>
        <dbReference type="Rhea" id="RHEA-COMP:14279"/>
        <dbReference type="ChEBI" id="CHEBI:15377"/>
        <dbReference type="ChEBI" id="CHEBI:15378"/>
        <dbReference type="ChEBI" id="CHEBI:16838"/>
        <dbReference type="ChEBI" id="CHEBI:43474"/>
        <dbReference type="EC" id="3.6.1.11"/>
    </reaction>
</comment>
<comment type="cofactor">
    <cofactor evidence="1">
        <name>a divalent metal cation</name>
        <dbReference type="ChEBI" id="CHEBI:60240"/>
    </cofactor>
    <text evidence="1">Binds 1 divalent metal cation per subunit.</text>
</comment>
<comment type="subcellular location">
    <subcellularLocation>
        <location evidence="1">Cytoplasm</location>
    </subcellularLocation>
</comment>
<comment type="similarity">
    <text evidence="1">Belongs to the SurE nucleotidase family.</text>
</comment>
<organism>
    <name type="scientific">Cronobacter sakazakii (strain ATCC BAA-894)</name>
    <name type="common">Enterobacter sakazakii</name>
    <dbReference type="NCBI Taxonomy" id="290339"/>
    <lineage>
        <taxon>Bacteria</taxon>
        <taxon>Pseudomonadati</taxon>
        <taxon>Pseudomonadota</taxon>
        <taxon>Gammaproteobacteria</taxon>
        <taxon>Enterobacterales</taxon>
        <taxon>Enterobacteriaceae</taxon>
        <taxon>Cronobacter</taxon>
    </lineage>
</organism>
<protein>
    <recommendedName>
        <fullName evidence="1">5'/3'-nucleotidase SurE</fullName>
        <ecNumber evidence="1">3.1.3.5</ecNumber>
        <ecNumber evidence="1">3.1.3.6</ecNumber>
    </recommendedName>
    <alternativeName>
        <fullName evidence="1">Exopolyphosphatase</fullName>
        <ecNumber evidence="1">3.6.1.11</ecNumber>
    </alternativeName>
    <alternativeName>
        <fullName evidence="1">Nucleoside monophosphate phosphohydrolase</fullName>
    </alternativeName>
</protein>
<name>SURE_CROS8</name>
<feature type="chain" id="PRO_1000007730" description="5'/3'-nucleotidase SurE">
    <location>
        <begin position="1"/>
        <end position="253"/>
    </location>
</feature>
<feature type="binding site" evidence="1">
    <location>
        <position position="8"/>
    </location>
    <ligand>
        <name>a divalent metal cation</name>
        <dbReference type="ChEBI" id="CHEBI:60240"/>
    </ligand>
</feature>
<feature type="binding site" evidence="1">
    <location>
        <position position="9"/>
    </location>
    <ligand>
        <name>a divalent metal cation</name>
        <dbReference type="ChEBI" id="CHEBI:60240"/>
    </ligand>
</feature>
<feature type="binding site" evidence="1">
    <location>
        <position position="39"/>
    </location>
    <ligand>
        <name>a divalent metal cation</name>
        <dbReference type="ChEBI" id="CHEBI:60240"/>
    </ligand>
</feature>
<feature type="binding site" evidence="1">
    <location>
        <position position="92"/>
    </location>
    <ligand>
        <name>a divalent metal cation</name>
        <dbReference type="ChEBI" id="CHEBI:60240"/>
    </ligand>
</feature>
<dbReference type="EC" id="3.1.3.5" evidence="1"/>
<dbReference type="EC" id="3.1.3.6" evidence="1"/>
<dbReference type="EC" id="3.6.1.11" evidence="1"/>
<dbReference type="EMBL" id="CP000783">
    <property type="protein sequence ID" value="ABU75838.1"/>
    <property type="molecule type" value="Genomic_DNA"/>
</dbReference>
<dbReference type="RefSeq" id="WP_007777731.1">
    <property type="nucleotide sequence ID" value="NC_009778.1"/>
</dbReference>
<dbReference type="SMR" id="A7MJ60"/>
<dbReference type="GeneID" id="56729447"/>
<dbReference type="KEGG" id="esa:ESA_00547"/>
<dbReference type="HOGENOM" id="CLU_045192_1_2_6"/>
<dbReference type="Proteomes" id="UP000000260">
    <property type="component" value="Chromosome"/>
</dbReference>
<dbReference type="GO" id="GO:0005737">
    <property type="term" value="C:cytoplasm"/>
    <property type="evidence" value="ECO:0007669"/>
    <property type="project" value="UniProtKB-SubCell"/>
</dbReference>
<dbReference type="GO" id="GO:0008254">
    <property type="term" value="F:3'-nucleotidase activity"/>
    <property type="evidence" value="ECO:0007669"/>
    <property type="project" value="UniProtKB-UniRule"/>
</dbReference>
<dbReference type="GO" id="GO:0008253">
    <property type="term" value="F:5'-nucleotidase activity"/>
    <property type="evidence" value="ECO:0007669"/>
    <property type="project" value="UniProtKB-UniRule"/>
</dbReference>
<dbReference type="GO" id="GO:0004309">
    <property type="term" value="F:exopolyphosphatase activity"/>
    <property type="evidence" value="ECO:0007669"/>
    <property type="project" value="UniProtKB-UniRule"/>
</dbReference>
<dbReference type="GO" id="GO:0046872">
    <property type="term" value="F:metal ion binding"/>
    <property type="evidence" value="ECO:0007669"/>
    <property type="project" value="UniProtKB-UniRule"/>
</dbReference>
<dbReference type="GO" id="GO:0000166">
    <property type="term" value="F:nucleotide binding"/>
    <property type="evidence" value="ECO:0007669"/>
    <property type="project" value="UniProtKB-KW"/>
</dbReference>
<dbReference type="FunFam" id="3.40.1210.10:FF:000001">
    <property type="entry name" value="5'/3'-nucleotidase SurE"/>
    <property type="match status" value="1"/>
</dbReference>
<dbReference type="Gene3D" id="3.40.1210.10">
    <property type="entry name" value="Survival protein SurE-like phosphatase/nucleotidase"/>
    <property type="match status" value="1"/>
</dbReference>
<dbReference type="HAMAP" id="MF_00060">
    <property type="entry name" value="SurE"/>
    <property type="match status" value="1"/>
</dbReference>
<dbReference type="InterPro" id="IPR030048">
    <property type="entry name" value="SurE"/>
</dbReference>
<dbReference type="InterPro" id="IPR002828">
    <property type="entry name" value="SurE-like_Pase/nucleotidase"/>
</dbReference>
<dbReference type="InterPro" id="IPR036523">
    <property type="entry name" value="SurE-like_sf"/>
</dbReference>
<dbReference type="NCBIfam" id="NF001488">
    <property type="entry name" value="PRK00346.1-1"/>
    <property type="match status" value="1"/>
</dbReference>
<dbReference type="NCBIfam" id="NF001489">
    <property type="entry name" value="PRK00346.1-3"/>
    <property type="match status" value="1"/>
</dbReference>
<dbReference type="NCBIfam" id="NF001490">
    <property type="entry name" value="PRK00346.1-4"/>
    <property type="match status" value="1"/>
</dbReference>
<dbReference type="NCBIfam" id="TIGR00087">
    <property type="entry name" value="surE"/>
    <property type="match status" value="1"/>
</dbReference>
<dbReference type="PANTHER" id="PTHR30457">
    <property type="entry name" value="5'-NUCLEOTIDASE SURE"/>
    <property type="match status" value="1"/>
</dbReference>
<dbReference type="PANTHER" id="PTHR30457:SF12">
    <property type="entry name" value="5'_3'-NUCLEOTIDASE SURE"/>
    <property type="match status" value="1"/>
</dbReference>
<dbReference type="Pfam" id="PF01975">
    <property type="entry name" value="SurE"/>
    <property type="match status" value="1"/>
</dbReference>
<dbReference type="SUPFAM" id="SSF64167">
    <property type="entry name" value="SurE-like"/>
    <property type="match status" value="1"/>
</dbReference>
<accession>A7MJ60</accession>
<reference key="1">
    <citation type="journal article" date="2010" name="PLoS ONE">
        <title>Genome sequence of Cronobacter sakazakii BAA-894 and comparative genomic hybridization analysis with other Cronobacter species.</title>
        <authorList>
            <person name="Kucerova E."/>
            <person name="Clifton S.W."/>
            <person name="Xia X.Q."/>
            <person name="Long F."/>
            <person name="Porwollik S."/>
            <person name="Fulton L."/>
            <person name="Fronick C."/>
            <person name="Minx P."/>
            <person name="Kyung K."/>
            <person name="Warren W."/>
            <person name="Fulton R."/>
            <person name="Feng D."/>
            <person name="Wollam A."/>
            <person name="Shah N."/>
            <person name="Bhonagiri V."/>
            <person name="Nash W.E."/>
            <person name="Hallsworth-Pepin K."/>
            <person name="Wilson R.K."/>
            <person name="McClelland M."/>
            <person name="Forsythe S.J."/>
        </authorList>
    </citation>
    <scope>NUCLEOTIDE SEQUENCE [LARGE SCALE GENOMIC DNA]</scope>
    <source>
        <strain>ATCC BAA-894</strain>
    </source>
</reference>
<proteinExistence type="inferred from homology"/>
<sequence length="253" mass="26970">MRILLSNDDGIHAPGIQALAKALREFAEVQVVAPDRNRSGASNSLTLESSLRTFTYPNGDIAVQMGTPTDCVFLGVNALMRPRPDVVVSGINAGPNLGDDVIYSGTVAAAMEGRHLGLPALAVSLNGHEHYETAAAVTCTLLRALAREPLRTGRILNINVPDLPLEEIKGIRVTRCGSRHPADKVIPQDDPRGNTLYWIGPPGEKLDAGPDTDFAAVDEGYVSVTPLHVDLTAHSAQDVVTRWLSSAGVNGQW</sequence>
<keyword id="KW-0963">Cytoplasm</keyword>
<keyword id="KW-0378">Hydrolase</keyword>
<keyword id="KW-0479">Metal-binding</keyword>
<keyword id="KW-0547">Nucleotide-binding</keyword>
<keyword id="KW-1185">Reference proteome</keyword>
<gene>
    <name evidence="1" type="primary">surE</name>
    <name type="ordered locus">ESA_00547</name>
</gene>
<evidence type="ECO:0000255" key="1">
    <source>
        <dbReference type="HAMAP-Rule" id="MF_00060"/>
    </source>
</evidence>